<organism>
    <name type="scientific">Neisseria gonorrhoeae</name>
    <dbReference type="NCBI Taxonomy" id="485"/>
    <lineage>
        <taxon>Bacteria</taxon>
        <taxon>Pseudomonadati</taxon>
        <taxon>Pseudomonadota</taxon>
        <taxon>Betaproteobacteria</taxon>
        <taxon>Neisseriales</taxon>
        <taxon>Neisseriaceae</taxon>
        <taxon>Neisseria</taxon>
    </lineage>
</organism>
<feature type="chain" id="PRO_0000070606" description="HTH-type transcriptional regulator MtrR">
    <location>
        <begin position="1"/>
        <end position="210"/>
    </location>
</feature>
<feature type="domain" description="HTH tetR-type" evidence="1">
    <location>
        <begin position="9"/>
        <end position="69"/>
    </location>
</feature>
<feature type="DNA-binding region" description="H-T-H motif" evidence="1">
    <location>
        <begin position="32"/>
        <end position="51"/>
    </location>
</feature>
<feature type="sequence variant" description="In penicillin-resistant isolates.">
    <original>H</original>
    <variation>Y</variation>
    <location>
        <position position="105"/>
    </location>
</feature>
<feature type="mutagenesis site" description="Does not bind DNA." evidence="6">
    <original>G</original>
    <variation>D</variation>
    <location>
        <position position="45"/>
    </location>
</feature>
<feature type="helix" evidence="12">
    <location>
        <begin position="9"/>
        <end position="26"/>
    </location>
</feature>
<feature type="turn" evidence="13">
    <location>
        <begin position="27"/>
        <end position="30"/>
    </location>
</feature>
<feature type="helix" evidence="12">
    <location>
        <begin position="33"/>
        <end position="40"/>
    </location>
</feature>
<feature type="helix" evidence="12">
    <location>
        <begin position="44"/>
        <end position="50"/>
    </location>
</feature>
<feature type="helix" evidence="12">
    <location>
        <begin position="54"/>
        <end position="70"/>
    </location>
</feature>
<feature type="turn" evidence="13">
    <location>
        <begin position="74"/>
        <end position="76"/>
    </location>
</feature>
<feature type="helix" evidence="12">
    <location>
        <begin position="84"/>
        <end position="101"/>
    </location>
</feature>
<feature type="helix" evidence="12">
    <location>
        <begin position="103"/>
        <end position="114"/>
    </location>
</feature>
<feature type="helix" evidence="12">
    <location>
        <begin position="120"/>
        <end position="122"/>
    </location>
</feature>
<feature type="helix" evidence="12">
    <location>
        <begin position="123"/>
        <end position="149"/>
    </location>
</feature>
<feature type="helix" evidence="12">
    <location>
        <begin position="159"/>
        <end position="179"/>
    </location>
</feature>
<feature type="helix" evidence="12">
    <location>
        <begin position="186"/>
        <end position="203"/>
    </location>
</feature>
<feature type="helix" evidence="12">
    <location>
        <begin position="205"/>
        <end position="207"/>
    </location>
</feature>
<dbReference type="EMBL" id="Z25797">
    <property type="protein sequence ID" value="CAA81047.1"/>
    <property type="molecule type" value="Genomic_DNA"/>
</dbReference>
<dbReference type="PIR" id="S42419">
    <property type="entry name" value="S42419"/>
</dbReference>
<dbReference type="RefSeq" id="WP_003693763.1">
    <property type="nucleotide sequence ID" value="NZ_WHPJ01000003.1"/>
</dbReference>
<dbReference type="PDB" id="3VIB">
    <property type="method" value="X-ray"/>
    <property type="resolution" value="2.40 A"/>
    <property type="chains" value="A/B/C/D=1-210"/>
</dbReference>
<dbReference type="PDB" id="6OF0">
    <property type="method" value="X-ray"/>
    <property type="resolution" value="2.00 A"/>
    <property type="chains" value="A/B/C/D=1-210"/>
</dbReference>
<dbReference type="PDB" id="7JNP">
    <property type="method" value="X-ray"/>
    <property type="resolution" value="2.60 A"/>
    <property type="chains" value="A/B=1-210"/>
</dbReference>
<dbReference type="PDB" id="7JU3">
    <property type="method" value="X-ray"/>
    <property type="resolution" value="2.70 A"/>
    <property type="chains" value="A/B=1-210"/>
</dbReference>
<dbReference type="PDB" id="8FW0">
    <property type="method" value="X-ray"/>
    <property type="resolution" value="2.37 A"/>
    <property type="chains" value="A/B/C/D=1-210"/>
</dbReference>
<dbReference type="PDB" id="8FW3">
    <property type="method" value="X-ray"/>
    <property type="resolution" value="2.22 A"/>
    <property type="chains" value="A/B/C/D=1-210"/>
</dbReference>
<dbReference type="PDB" id="8FW8">
    <property type="method" value="X-ray"/>
    <property type="resolution" value="2.31 A"/>
    <property type="chains" value="A/B/C/D=1-210"/>
</dbReference>
<dbReference type="PDB" id="8SSH">
    <property type="method" value="X-ray"/>
    <property type="resolution" value="3.20 A"/>
    <property type="chains" value="A/B/C/D=1-210"/>
</dbReference>
<dbReference type="PDBsum" id="3VIB"/>
<dbReference type="PDBsum" id="6OF0"/>
<dbReference type="PDBsum" id="7JNP"/>
<dbReference type="PDBsum" id="7JU3"/>
<dbReference type="PDBsum" id="8FW0"/>
<dbReference type="PDBsum" id="8FW3"/>
<dbReference type="PDBsum" id="8FW8"/>
<dbReference type="PDBsum" id="8SSH"/>
<dbReference type="SMR" id="P39897"/>
<dbReference type="EvolutionaryTrace" id="P39897"/>
<dbReference type="GO" id="GO:0003677">
    <property type="term" value="F:DNA binding"/>
    <property type="evidence" value="ECO:0007669"/>
    <property type="project" value="UniProtKB-KW"/>
</dbReference>
<dbReference type="Gene3D" id="1.10.357.10">
    <property type="entry name" value="Tetracycline Repressor, domain 2"/>
    <property type="match status" value="1"/>
</dbReference>
<dbReference type="InterPro" id="IPR023772">
    <property type="entry name" value="DNA-bd_HTH_TetR-type_CS"/>
</dbReference>
<dbReference type="InterPro" id="IPR009057">
    <property type="entry name" value="Homeodomain-like_sf"/>
</dbReference>
<dbReference type="InterPro" id="IPR050624">
    <property type="entry name" value="HTH-type_Tx_Regulator"/>
</dbReference>
<dbReference type="InterPro" id="IPR001647">
    <property type="entry name" value="HTH_TetR"/>
</dbReference>
<dbReference type="InterPro" id="IPR036271">
    <property type="entry name" value="Tet_transcr_reg_TetR-rel_C_sf"/>
</dbReference>
<dbReference type="InterPro" id="IPR013572">
    <property type="entry name" value="Tscrpt_reg_MAATS_C"/>
</dbReference>
<dbReference type="PANTHER" id="PTHR43479">
    <property type="entry name" value="ACREF/ENVCD OPERON REPRESSOR-RELATED"/>
    <property type="match status" value="1"/>
</dbReference>
<dbReference type="PANTHER" id="PTHR43479:SF11">
    <property type="entry name" value="ACREF_ENVCD OPERON REPRESSOR-RELATED"/>
    <property type="match status" value="1"/>
</dbReference>
<dbReference type="Pfam" id="PF08361">
    <property type="entry name" value="TetR_C_2"/>
    <property type="match status" value="1"/>
</dbReference>
<dbReference type="Pfam" id="PF00440">
    <property type="entry name" value="TetR_N"/>
    <property type="match status" value="1"/>
</dbReference>
<dbReference type="PRINTS" id="PR00455">
    <property type="entry name" value="HTHTETR"/>
</dbReference>
<dbReference type="SUPFAM" id="SSF46689">
    <property type="entry name" value="Homeodomain-like"/>
    <property type="match status" value="1"/>
</dbReference>
<dbReference type="SUPFAM" id="SSF48498">
    <property type="entry name" value="Tetracyclin repressor-like, C-terminal domain"/>
    <property type="match status" value="1"/>
</dbReference>
<dbReference type="PROSITE" id="PS01081">
    <property type="entry name" value="HTH_TETR_1"/>
    <property type="match status" value="1"/>
</dbReference>
<dbReference type="PROSITE" id="PS50977">
    <property type="entry name" value="HTH_TETR_2"/>
    <property type="match status" value="1"/>
</dbReference>
<name>MTRR_NEIGO</name>
<comment type="function">
    <text evidence="2 4 5 6">Controls the permeability of the cell envelope to hydrophobic compounds such as antibiotics and detergents (PubMed:8196548). Represses transcription of the mtrCDE-encoded efflux pump by binding within the mtrCDE promoter (PubMed:23221802, PubMed:9209024). Also negatively regulates the expression of farR, by binding to its promoter region, leading indirectly to the positive regulation of expression of the farAB-encoded efflux pump (PubMed:14645274).</text>
</comment>
<comment type="activity regulation">
    <text evidence="3">DNA binding is affected significantly by increasing the NaCl concentration.</text>
</comment>
<comment type="subunit">
    <text evidence="3">Homodimer. Binds to DNA as a pair of dimers.</text>
</comment>
<comment type="disruption phenotype">
    <text evidence="5">Deletion of the gene results in increased resistance to antibiotics and detergents.</text>
</comment>
<comment type="miscellaneous">
    <text evidence="10">The MtrA and MtrR-binding sites are sterically close and addition of an effector increases the affinity of MtrA for the mtrCDE promoter such that MtrR binding is negatively impacted.</text>
</comment>
<reference key="1">
    <citation type="journal article" date="1994" name="Mol. Microbiol.">
        <title>Regulation of the permeability of the gonococcal cell envelope by the mtr system.</title>
        <authorList>
            <person name="Pan W."/>
            <person name="Spratt B.G."/>
        </authorList>
    </citation>
    <scope>NUCLEOTIDE SEQUENCE [GENOMIC DNA]</scope>
    <scope>FUNCTION</scope>
    <scope>DISRUPTION PHENOTYPE</scope>
    <source>
        <strain>FA19</strain>
    </source>
</reference>
<reference key="2">
    <citation type="journal article" date="1997" name="J. Bacteriol.">
        <title>The MtrR repressor binds the DNA sequence between the mtrR and mtrC genes of Neisseria gonorrhoeae.</title>
        <authorList>
            <person name="Lucas C.E."/>
            <person name="Balthazar J.T."/>
            <person name="Hagman K.E."/>
            <person name="Shafer W.M."/>
        </authorList>
    </citation>
    <scope>FUNCTION</scope>
    <scope>DNA-BINDING</scope>
    <scope>MUTAGENESIS OF GLY-45</scope>
    <source>
        <strain>FA19</strain>
    </source>
</reference>
<reference key="3">
    <citation type="journal article" date="2003" name="J. Bacteriol.">
        <title>FarR regulates the farAB-encoded efflux pump of Neisseria gonorrhoeae via an MtrR regulatory mechanism.</title>
        <authorList>
            <person name="Lee E.H."/>
            <person name="Rouquette-Loughlin C."/>
            <person name="Folster J.P."/>
            <person name="Shafer W.M."/>
        </authorList>
    </citation>
    <scope>FUNCTION</scope>
    <source>
        <strain>FA19</strain>
    </source>
</reference>
<reference key="4">
    <citation type="journal article" date="2005" name="J. Bacteriol.">
        <title>Characterization of the multiple transferable resistance repressor, MtrR, from Neisseria gonorrhoeae.</title>
        <authorList>
            <person name="Hoffmann K.M."/>
            <person name="Williams D."/>
            <person name="Shafer W.M."/>
            <person name="Brennan R.G."/>
        </authorList>
    </citation>
    <scope>DNA-BINDING</scope>
    <scope>ACTIVITY REGULATION</scope>
    <scope>SUBUNIT</scope>
    <source>
        <strain>FA19</strain>
    </source>
</reference>
<reference key="5">
    <citation type="journal article" date="2012" name="MBio">
        <title>Dueling regulatory properties of a transcriptional activator (MtrA) and repressor (MtrR) that control efflux pump gene expression in Neisseria gonorrhoeae.</title>
        <authorList>
            <person name="Zalucki Y.M."/>
            <person name="Dhulipala V."/>
            <person name="Shafer W.M."/>
        </authorList>
    </citation>
    <scope>FUNCTION</scope>
    <scope>DNA-BINDING</scope>
    <source>
        <strain>FA19</strain>
    </source>
</reference>
<reference evidence="11" key="6">
    <citation type="submission" date="2011-09" db="PDB data bank">
        <title>Structural basis for multidrug recognitionand antimicrobial resistance by MtrR, an efflux pump regulator from Neisseria gonorrhoeae.</title>
        <authorList>
            <person name="Kumaraswami M."/>
            <person name="Shafer W.M."/>
            <person name="Brennan R.G."/>
        </authorList>
    </citation>
    <scope>X-RAY CRYSTALLOGRAPHY (2.40 ANGSTROMS)</scope>
</reference>
<gene>
    <name evidence="7" type="primary">mtrR</name>
</gene>
<keyword id="KW-0002">3D-structure</keyword>
<keyword id="KW-0238">DNA-binding</keyword>
<keyword id="KW-0678">Repressor</keyword>
<keyword id="KW-0804">Transcription</keyword>
<keyword id="KW-0805">Transcription regulation</keyword>
<proteinExistence type="evidence at protein level"/>
<accession>P39897</accession>
<protein>
    <recommendedName>
        <fullName evidence="9">HTH-type transcriptional regulator MtrR</fullName>
    </recommendedName>
    <alternativeName>
        <fullName evidence="8">Multiple transferrable resistance regulator</fullName>
    </alternativeName>
</protein>
<sequence length="210" mass="24193">MRKTKTEALKTKEHLMLAALETFYRKGIARTSLNEIAQAAGVTRGALYWHFKNKEDLFDALFQRICDDIENCIAQDAADAEGGSWTVFRHTLLHFFERLQSNDIHYKFHNILFLKCEHTEQNAAVIAIARKHQAIWREKITAVLTEAVENQDLADDLDKETAVIFIKSTLDGLIWRWFSSGESFDLGKTAPRIIGIMMDNLENHPCLRRK</sequence>
<evidence type="ECO:0000255" key="1">
    <source>
        <dbReference type="PROSITE-ProRule" id="PRU00335"/>
    </source>
</evidence>
<evidence type="ECO:0000269" key="2">
    <source>
    </source>
</evidence>
<evidence type="ECO:0000269" key="3">
    <source>
    </source>
</evidence>
<evidence type="ECO:0000269" key="4">
    <source>
    </source>
</evidence>
<evidence type="ECO:0000269" key="5">
    <source>
    </source>
</evidence>
<evidence type="ECO:0000269" key="6">
    <source>
    </source>
</evidence>
<evidence type="ECO:0000303" key="7">
    <source>
    </source>
</evidence>
<evidence type="ECO:0000303" key="8">
    <source>
    </source>
</evidence>
<evidence type="ECO:0000305" key="9"/>
<evidence type="ECO:0000305" key="10">
    <source>
    </source>
</evidence>
<evidence type="ECO:0007744" key="11">
    <source>
        <dbReference type="PDB" id="3VIB"/>
    </source>
</evidence>
<evidence type="ECO:0007829" key="12">
    <source>
        <dbReference type="PDB" id="6OF0"/>
    </source>
</evidence>
<evidence type="ECO:0007829" key="13">
    <source>
        <dbReference type="PDB" id="8FW8"/>
    </source>
</evidence>